<keyword id="KW-0328">Glycosyltransferase</keyword>
<keyword id="KW-0460">Magnesium</keyword>
<keyword id="KW-0665">Pyrimidine biosynthesis</keyword>
<keyword id="KW-0808">Transferase</keyword>
<protein>
    <recommendedName>
        <fullName evidence="1">Orotate phosphoribosyltransferase</fullName>
        <shortName evidence="1">OPRT</shortName>
        <shortName evidence="1">OPRTase</shortName>
        <ecNumber evidence="1">2.4.2.10</ecNumber>
    </recommendedName>
</protein>
<feature type="chain" id="PRO_1000066260" description="Orotate phosphoribosyltransferase">
    <location>
        <begin position="1"/>
        <end position="213"/>
    </location>
</feature>
<feature type="binding site" description="in other chain" evidence="1">
    <location>
        <position position="26"/>
    </location>
    <ligand>
        <name>5-phospho-alpha-D-ribose 1-diphosphate</name>
        <dbReference type="ChEBI" id="CHEBI:58017"/>
        <note>ligand shared between dimeric partners</note>
    </ligand>
</feature>
<feature type="binding site" evidence="1">
    <location>
        <begin position="34"/>
        <end position="35"/>
    </location>
    <ligand>
        <name>orotate</name>
        <dbReference type="ChEBI" id="CHEBI:30839"/>
    </ligand>
</feature>
<feature type="binding site" description="in other chain" evidence="1">
    <location>
        <begin position="72"/>
        <end position="73"/>
    </location>
    <ligand>
        <name>5-phospho-alpha-D-ribose 1-diphosphate</name>
        <dbReference type="ChEBI" id="CHEBI:58017"/>
        <note>ligand shared between dimeric partners</note>
    </ligand>
</feature>
<feature type="binding site" evidence="1">
    <location>
        <position position="98"/>
    </location>
    <ligand>
        <name>5-phospho-alpha-D-ribose 1-diphosphate</name>
        <dbReference type="ChEBI" id="CHEBI:58017"/>
        <note>ligand shared between dimeric partners</note>
    </ligand>
</feature>
<feature type="binding site" description="in other chain" evidence="1">
    <location>
        <position position="99"/>
    </location>
    <ligand>
        <name>5-phospho-alpha-D-ribose 1-diphosphate</name>
        <dbReference type="ChEBI" id="CHEBI:58017"/>
        <note>ligand shared between dimeric partners</note>
    </ligand>
</feature>
<feature type="binding site" evidence="1">
    <location>
        <position position="102"/>
    </location>
    <ligand>
        <name>5-phospho-alpha-D-ribose 1-diphosphate</name>
        <dbReference type="ChEBI" id="CHEBI:58017"/>
        <note>ligand shared between dimeric partners</note>
    </ligand>
</feature>
<feature type="binding site" evidence="1">
    <location>
        <position position="104"/>
    </location>
    <ligand>
        <name>5-phospho-alpha-D-ribose 1-diphosphate</name>
        <dbReference type="ChEBI" id="CHEBI:58017"/>
        <note>ligand shared between dimeric partners</note>
    </ligand>
</feature>
<feature type="binding site" description="in other chain" evidence="1">
    <location>
        <begin position="123"/>
        <end position="131"/>
    </location>
    <ligand>
        <name>5-phospho-alpha-D-ribose 1-diphosphate</name>
        <dbReference type="ChEBI" id="CHEBI:58017"/>
        <note>ligand shared between dimeric partners</note>
    </ligand>
</feature>
<feature type="binding site" evidence="1">
    <location>
        <position position="127"/>
    </location>
    <ligand>
        <name>orotate</name>
        <dbReference type="ChEBI" id="CHEBI:30839"/>
    </ligand>
</feature>
<feature type="binding site" evidence="1">
    <location>
        <position position="155"/>
    </location>
    <ligand>
        <name>orotate</name>
        <dbReference type="ChEBI" id="CHEBI:30839"/>
    </ligand>
</feature>
<gene>
    <name evidence="1" type="primary">pyrE</name>
    <name type="ordered locus">NMC0345</name>
</gene>
<accession>A1KS25</accession>
<sequence>MTDFRQDFLKFSLAQNVLKFGEFTTKAGRRSPYFFNAGLFNDGLSTLQLAKFYAQSIIESGIRFDMLFGPAYKGIILAAATAMMLAEKGVNVPFAYNRKEAKDHGEGGVLVGAPLKGRVLIIDDVISAGTSVRESIKLIEAEGATPAGVAIALDRMEKGTGELSAVQEVEKQYGLPVAPIASLNDLFILLQNNPEFGQFLEPVRAYRRQYGVE</sequence>
<comment type="function">
    <text evidence="1">Catalyzes the transfer of a ribosyl phosphate group from 5-phosphoribose 1-diphosphate to orotate, leading to the formation of orotidine monophosphate (OMP).</text>
</comment>
<comment type="catalytic activity">
    <reaction evidence="1">
        <text>orotidine 5'-phosphate + diphosphate = orotate + 5-phospho-alpha-D-ribose 1-diphosphate</text>
        <dbReference type="Rhea" id="RHEA:10380"/>
        <dbReference type="ChEBI" id="CHEBI:30839"/>
        <dbReference type="ChEBI" id="CHEBI:33019"/>
        <dbReference type="ChEBI" id="CHEBI:57538"/>
        <dbReference type="ChEBI" id="CHEBI:58017"/>
        <dbReference type="EC" id="2.4.2.10"/>
    </reaction>
</comment>
<comment type="cofactor">
    <cofactor evidence="1">
        <name>Mg(2+)</name>
        <dbReference type="ChEBI" id="CHEBI:18420"/>
    </cofactor>
</comment>
<comment type="pathway">
    <text evidence="1">Pyrimidine metabolism; UMP biosynthesis via de novo pathway; UMP from orotate: step 1/2.</text>
</comment>
<comment type="subunit">
    <text evidence="1">Homodimer.</text>
</comment>
<comment type="similarity">
    <text evidence="1">Belongs to the purine/pyrimidine phosphoribosyltransferase family. PyrE subfamily.</text>
</comment>
<dbReference type="EC" id="2.4.2.10" evidence="1"/>
<dbReference type="EMBL" id="AM421808">
    <property type="protein sequence ID" value="CAM09655.1"/>
    <property type="molecule type" value="Genomic_DNA"/>
</dbReference>
<dbReference type="RefSeq" id="WP_002217982.1">
    <property type="nucleotide sequence ID" value="NC_008767.1"/>
</dbReference>
<dbReference type="SMR" id="A1KS25"/>
<dbReference type="GeneID" id="93386781"/>
<dbReference type="KEGG" id="nmc:NMC0345"/>
<dbReference type="HOGENOM" id="CLU_074878_0_1_4"/>
<dbReference type="UniPathway" id="UPA00070">
    <property type="reaction ID" value="UER00119"/>
</dbReference>
<dbReference type="Proteomes" id="UP000002286">
    <property type="component" value="Chromosome"/>
</dbReference>
<dbReference type="GO" id="GO:0005737">
    <property type="term" value="C:cytoplasm"/>
    <property type="evidence" value="ECO:0007669"/>
    <property type="project" value="TreeGrafter"/>
</dbReference>
<dbReference type="GO" id="GO:0000287">
    <property type="term" value="F:magnesium ion binding"/>
    <property type="evidence" value="ECO:0007669"/>
    <property type="project" value="UniProtKB-UniRule"/>
</dbReference>
<dbReference type="GO" id="GO:0004588">
    <property type="term" value="F:orotate phosphoribosyltransferase activity"/>
    <property type="evidence" value="ECO:0007669"/>
    <property type="project" value="UniProtKB-UniRule"/>
</dbReference>
<dbReference type="GO" id="GO:0006207">
    <property type="term" value="P:'de novo' pyrimidine nucleobase biosynthetic process"/>
    <property type="evidence" value="ECO:0007669"/>
    <property type="project" value="TreeGrafter"/>
</dbReference>
<dbReference type="GO" id="GO:0044205">
    <property type="term" value="P:'de novo' UMP biosynthetic process"/>
    <property type="evidence" value="ECO:0007669"/>
    <property type="project" value="UniProtKB-UniRule"/>
</dbReference>
<dbReference type="GO" id="GO:0046132">
    <property type="term" value="P:pyrimidine ribonucleoside biosynthetic process"/>
    <property type="evidence" value="ECO:0007669"/>
    <property type="project" value="TreeGrafter"/>
</dbReference>
<dbReference type="CDD" id="cd06223">
    <property type="entry name" value="PRTases_typeI"/>
    <property type="match status" value="1"/>
</dbReference>
<dbReference type="FunFam" id="3.40.50.2020:FF:000008">
    <property type="entry name" value="Orotate phosphoribosyltransferase"/>
    <property type="match status" value="1"/>
</dbReference>
<dbReference type="Gene3D" id="3.40.50.2020">
    <property type="match status" value="1"/>
</dbReference>
<dbReference type="HAMAP" id="MF_01208">
    <property type="entry name" value="PyrE"/>
    <property type="match status" value="1"/>
</dbReference>
<dbReference type="InterPro" id="IPR023031">
    <property type="entry name" value="OPRT"/>
</dbReference>
<dbReference type="InterPro" id="IPR004467">
    <property type="entry name" value="Or_phspho_trans_dom"/>
</dbReference>
<dbReference type="InterPro" id="IPR000836">
    <property type="entry name" value="PRibTrfase_dom"/>
</dbReference>
<dbReference type="InterPro" id="IPR029057">
    <property type="entry name" value="PRTase-like"/>
</dbReference>
<dbReference type="NCBIfam" id="TIGR00336">
    <property type="entry name" value="pyrE"/>
    <property type="match status" value="1"/>
</dbReference>
<dbReference type="PANTHER" id="PTHR46683">
    <property type="entry name" value="OROTATE PHOSPHORIBOSYLTRANSFERASE 1-RELATED"/>
    <property type="match status" value="1"/>
</dbReference>
<dbReference type="PANTHER" id="PTHR46683:SF1">
    <property type="entry name" value="OROTATE PHOSPHORIBOSYLTRANSFERASE 1-RELATED"/>
    <property type="match status" value="1"/>
</dbReference>
<dbReference type="Pfam" id="PF00156">
    <property type="entry name" value="Pribosyltran"/>
    <property type="match status" value="1"/>
</dbReference>
<dbReference type="SUPFAM" id="SSF53271">
    <property type="entry name" value="PRTase-like"/>
    <property type="match status" value="1"/>
</dbReference>
<dbReference type="PROSITE" id="PS00103">
    <property type="entry name" value="PUR_PYR_PR_TRANSFER"/>
    <property type="match status" value="1"/>
</dbReference>
<proteinExistence type="inferred from homology"/>
<name>PYRE_NEIMF</name>
<organism>
    <name type="scientific">Neisseria meningitidis serogroup C / serotype 2a (strain ATCC 700532 / DSM 15464 / FAM18)</name>
    <dbReference type="NCBI Taxonomy" id="272831"/>
    <lineage>
        <taxon>Bacteria</taxon>
        <taxon>Pseudomonadati</taxon>
        <taxon>Pseudomonadota</taxon>
        <taxon>Betaproteobacteria</taxon>
        <taxon>Neisseriales</taxon>
        <taxon>Neisseriaceae</taxon>
        <taxon>Neisseria</taxon>
    </lineage>
</organism>
<evidence type="ECO:0000255" key="1">
    <source>
        <dbReference type="HAMAP-Rule" id="MF_01208"/>
    </source>
</evidence>
<reference key="1">
    <citation type="journal article" date="2007" name="PLoS Genet.">
        <title>Meningococcal genetic variation mechanisms viewed through comparative analysis of serogroup C strain FAM18.</title>
        <authorList>
            <person name="Bentley S.D."/>
            <person name="Vernikos G.S."/>
            <person name="Snyder L.A.S."/>
            <person name="Churcher C."/>
            <person name="Arrowsmith C."/>
            <person name="Chillingworth T."/>
            <person name="Cronin A."/>
            <person name="Davis P.H."/>
            <person name="Holroyd N.E."/>
            <person name="Jagels K."/>
            <person name="Maddison M."/>
            <person name="Moule S."/>
            <person name="Rabbinowitsch E."/>
            <person name="Sharp S."/>
            <person name="Unwin L."/>
            <person name="Whitehead S."/>
            <person name="Quail M.A."/>
            <person name="Achtman M."/>
            <person name="Barrell B.G."/>
            <person name="Saunders N.J."/>
            <person name="Parkhill J."/>
        </authorList>
    </citation>
    <scope>NUCLEOTIDE SEQUENCE [LARGE SCALE GENOMIC DNA]</scope>
    <source>
        <strain>ATCC 700532 / DSM 15464 / FAM18</strain>
    </source>
</reference>